<evidence type="ECO:0000250" key="1"/>
<evidence type="ECO:0000269" key="2">
    <source>
    </source>
</evidence>
<evidence type="ECO:0000269" key="3">
    <source>
    </source>
</evidence>
<evidence type="ECO:0000305" key="4"/>
<evidence type="ECO:0007829" key="5">
    <source>
        <dbReference type="PDB" id="4J1O"/>
    </source>
</evidence>
<gene>
    <name type="primary">hpbD</name>
    <name type="ordered locus">Pden_1187</name>
</gene>
<comment type="function">
    <text evidence="2">Catalyzes the 2-epimerization of trans-4-hydroxy-L-proline betaine (tHyp-B) to cis-4-hydroxy-D-proline betaine (cHyp-B). Is involved in a catabolic pathway that degrades tHyp-B to alpha-ketoglutarate. This pathway would permit the utilization of tHyp-B as a carbon and nitrogen source in the absence of osmotic stress, since tHyp-B functions as an osmolyte and is not catabolized when it is needed as osmoprotectant. Can also catalyze the racemization of L-proline betaine.</text>
</comment>
<comment type="catalytic activity">
    <reaction evidence="2 3">
        <text>trans-4-hydroxy-L-proline betaine = cis-4-hydroxy-D-proline betaine</text>
        <dbReference type="Rhea" id="RHEA:47544"/>
        <dbReference type="ChEBI" id="CHEBI:85533"/>
        <dbReference type="ChEBI" id="CHEBI:85534"/>
        <dbReference type="EC" id="5.1.1.22"/>
    </reaction>
</comment>
<comment type="catalytic activity">
    <reaction evidence="2 3">
        <text>L-proline betaine = D-proline betaine</text>
        <dbReference type="Rhea" id="RHEA:51884"/>
        <dbReference type="ChEBI" id="CHEBI:35280"/>
        <dbReference type="ChEBI" id="CHEBI:134398"/>
        <dbReference type="EC" id="5.1.1.22"/>
    </reaction>
</comment>
<comment type="cofactor">
    <cofactor evidence="3">
        <name>Mg(2+)</name>
        <dbReference type="ChEBI" id="CHEBI:18420"/>
    </cofactor>
    <text evidence="3">Binds 1 Mg(2+) ion per subunit.</text>
</comment>
<comment type="biophysicochemical properties">
    <kinetics>
        <KM evidence="2">64 mM for trans-4-hydroxy-L-proline betaine</KM>
        <KM evidence="2">34 mM for L-proline betaine</KM>
        <KM evidence="3">7.3 mM for D-proline betaine</KM>
        <text evidence="2 3">kcat is 110 sec(-1) with trans-4-hydroxy-L-proline betaine as substrate (PubMed:24056934). kcat is 68 sec(-1) with L-proline betaine as substrate (PubMed:24056934). kcat is 28 sec(-1) with D-proline betaine as substrate (PubMed:24520058).</text>
    </kinetics>
</comment>
<comment type="induction">
    <text evidence="2">Up-regulated by tHyp-B and cHyp-B. Repressed by high salt concentration.</text>
</comment>
<comment type="disruption phenotype">
    <text evidence="2">Cells lacking this gene grow more slowly than wild-type on tHyp-B as sole carbon source, whereas growth is normal on cHyp-B. When both hpbD and hypF are disrupted, P.denitrificans is unable to utilize tHyp-B or tHyp as sole carbon source.</text>
</comment>
<comment type="similarity">
    <text evidence="4">Belongs to the mandelate racemase/muconate lactonizing enzyme family.</text>
</comment>
<accession>A1B198</accession>
<proteinExistence type="evidence at protein level"/>
<protein>
    <recommendedName>
        <fullName>4-hydroxyproline betaine 2-epimerase</fullName>
        <shortName>Hyp-B 2-epimerase</shortName>
        <ecNumber evidence="2 3">5.1.1.22</ecNumber>
    </recommendedName>
    <alternativeName>
        <fullName>(4R)-4-hydroxyproline betaine 2-epimerase</fullName>
    </alternativeName>
</protein>
<dbReference type="EC" id="5.1.1.22" evidence="2 3"/>
<dbReference type="EMBL" id="CP000489">
    <property type="protein sequence ID" value="ABL69292.1"/>
    <property type="molecule type" value="Genomic_DNA"/>
</dbReference>
<dbReference type="RefSeq" id="WP_011747512.1">
    <property type="nucleotide sequence ID" value="NC_008686.1"/>
</dbReference>
<dbReference type="PDB" id="4E8G">
    <property type="method" value="X-ray"/>
    <property type="resolution" value="2.00 A"/>
    <property type="chains" value="A/B=2-369"/>
</dbReference>
<dbReference type="PDB" id="4IZG">
    <property type="method" value="X-ray"/>
    <property type="resolution" value="1.70 A"/>
    <property type="chains" value="A/B=1-369"/>
</dbReference>
<dbReference type="PDB" id="4J1O">
    <property type="method" value="X-ray"/>
    <property type="resolution" value="1.60 A"/>
    <property type="chains" value="A/B=1-369"/>
</dbReference>
<dbReference type="PDBsum" id="4E8G"/>
<dbReference type="PDBsum" id="4IZG"/>
<dbReference type="PDBsum" id="4J1O"/>
<dbReference type="SMR" id="A1B198"/>
<dbReference type="STRING" id="318586.Pden_1187"/>
<dbReference type="EnsemblBacteria" id="ABL69292">
    <property type="protein sequence ID" value="ABL69292"/>
    <property type="gene ID" value="Pden_1187"/>
</dbReference>
<dbReference type="GeneID" id="93452403"/>
<dbReference type="KEGG" id="pde:Pden_1187"/>
<dbReference type="eggNOG" id="COG4948">
    <property type="taxonomic scope" value="Bacteria"/>
</dbReference>
<dbReference type="HOGENOM" id="CLU_030273_4_5_5"/>
<dbReference type="OrthoDB" id="9802699at2"/>
<dbReference type="BioCyc" id="MetaCyc:MONOMER-18941"/>
<dbReference type="BRENDA" id="5.1.1.22">
    <property type="organism ID" value="3341"/>
</dbReference>
<dbReference type="EvolutionaryTrace" id="A1B198"/>
<dbReference type="Proteomes" id="UP000000361">
    <property type="component" value="Chromosome 1"/>
</dbReference>
<dbReference type="GO" id="GO:0047661">
    <property type="term" value="F:amino-acid racemase activity"/>
    <property type="evidence" value="ECO:0000314"/>
    <property type="project" value="UniProtKB"/>
</dbReference>
<dbReference type="GO" id="GO:0046872">
    <property type="term" value="F:metal ion binding"/>
    <property type="evidence" value="ECO:0007669"/>
    <property type="project" value="UniProtKB-KW"/>
</dbReference>
<dbReference type="GO" id="GO:0016855">
    <property type="term" value="F:racemase and epimerase activity, acting on amino acids and derivatives"/>
    <property type="evidence" value="ECO:0000314"/>
    <property type="project" value="CACAO"/>
</dbReference>
<dbReference type="GO" id="GO:0006579">
    <property type="term" value="P:amino-acid betaine catabolic process"/>
    <property type="evidence" value="ECO:0000315"/>
    <property type="project" value="UniProtKB"/>
</dbReference>
<dbReference type="CDD" id="cd00308">
    <property type="entry name" value="enolase_like"/>
    <property type="match status" value="1"/>
</dbReference>
<dbReference type="FunFam" id="3.20.20.120:FF:000020">
    <property type="entry name" value="4-hydroxyproline betaine 2-epimerase"/>
    <property type="match status" value="1"/>
</dbReference>
<dbReference type="FunFam" id="3.30.390.10:FF:000009">
    <property type="entry name" value="Hydrophobic dipeptide epimerase"/>
    <property type="match status" value="1"/>
</dbReference>
<dbReference type="Gene3D" id="3.20.20.120">
    <property type="entry name" value="Enolase-like C-terminal domain"/>
    <property type="match status" value="1"/>
</dbReference>
<dbReference type="Gene3D" id="3.30.390.10">
    <property type="entry name" value="Enolase-like, N-terminal domain"/>
    <property type="match status" value="1"/>
</dbReference>
<dbReference type="InterPro" id="IPR034622">
    <property type="entry name" value="4R-hPro_betaine_2-epimerase"/>
</dbReference>
<dbReference type="InterPro" id="IPR034593">
    <property type="entry name" value="DgoD-like"/>
</dbReference>
<dbReference type="InterPro" id="IPR036849">
    <property type="entry name" value="Enolase-like_C_sf"/>
</dbReference>
<dbReference type="InterPro" id="IPR029017">
    <property type="entry name" value="Enolase-like_N"/>
</dbReference>
<dbReference type="InterPro" id="IPR029065">
    <property type="entry name" value="Enolase_C-like"/>
</dbReference>
<dbReference type="InterPro" id="IPR013342">
    <property type="entry name" value="Mandelate_racemase_C"/>
</dbReference>
<dbReference type="InterPro" id="IPR013341">
    <property type="entry name" value="Mandelate_racemase_N_dom"/>
</dbReference>
<dbReference type="PANTHER" id="PTHR48080">
    <property type="entry name" value="D-GALACTONATE DEHYDRATASE-RELATED"/>
    <property type="match status" value="1"/>
</dbReference>
<dbReference type="PANTHER" id="PTHR48080:SF3">
    <property type="entry name" value="ENOLASE SUPERFAMILY MEMBER DDB_G0284701"/>
    <property type="match status" value="1"/>
</dbReference>
<dbReference type="Pfam" id="PF13378">
    <property type="entry name" value="MR_MLE_C"/>
    <property type="match status" value="1"/>
</dbReference>
<dbReference type="Pfam" id="PF02746">
    <property type="entry name" value="MR_MLE_N"/>
    <property type="match status" value="1"/>
</dbReference>
<dbReference type="SFLD" id="SFLDF00556">
    <property type="entry name" value="4R-hydroxyproline_betaine_2-ep"/>
    <property type="match status" value="1"/>
</dbReference>
<dbReference type="SFLD" id="SFLDS00001">
    <property type="entry name" value="Enolase"/>
    <property type="match status" value="1"/>
</dbReference>
<dbReference type="SMART" id="SM00922">
    <property type="entry name" value="MR_MLE"/>
    <property type="match status" value="1"/>
</dbReference>
<dbReference type="SUPFAM" id="SSF51604">
    <property type="entry name" value="Enolase C-terminal domain-like"/>
    <property type="match status" value="1"/>
</dbReference>
<dbReference type="SUPFAM" id="SSF54826">
    <property type="entry name" value="Enolase N-terminal domain-like"/>
    <property type="match status" value="1"/>
</dbReference>
<name>HPBD_PARDP</name>
<organism>
    <name type="scientific">Paracoccus denitrificans (strain Pd 1222)</name>
    <dbReference type="NCBI Taxonomy" id="318586"/>
    <lineage>
        <taxon>Bacteria</taxon>
        <taxon>Pseudomonadati</taxon>
        <taxon>Pseudomonadota</taxon>
        <taxon>Alphaproteobacteria</taxon>
        <taxon>Rhodobacterales</taxon>
        <taxon>Paracoccaceae</taxon>
        <taxon>Paracoccus</taxon>
    </lineage>
</organism>
<keyword id="KW-0002">3D-structure</keyword>
<keyword id="KW-0413">Isomerase</keyword>
<keyword id="KW-0460">Magnesium</keyword>
<keyword id="KW-0479">Metal-binding</keyword>
<keyword id="KW-1185">Reference proteome</keyword>
<sequence>MKIAEIHVYAHDLPVKDGPYTIASSTVWSLQTTLVKIVADSGLAGWGETCPVGPTYAPSHALGARAALAEMAPGLIGANPLQPLVLRRRMDGLLCGHNYAKAAIDIAAYDLMGKHYGVRVADLLGGVAAERVPSYYATGIGQPDEIARIAAEKVAEGFPRLQIKIGGRPVEIDIETVRKVWERIRGTGTRLAVDGNRSLPSRDALRLSRECPEIPFVLEQPCNTLEEIAAIRGRVQHGIYLDESGEDLSTVIRAAGQGLCDGFGMKLTRIGGLQQMAAFRDICEARALPHSCDDAWGGDIIAAACTHIGATVQPRLNEGVWVAQPYIAQPYDEENGIRIAGGHIDLPKGPGLGITPDESLFGPPVASFS</sequence>
<feature type="chain" id="PRO_0000425279" description="4-hydroxyproline betaine 2-epimerase">
    <location>
        <begin position="1"/>
        <end position="369"/>
    </location>
</feature>
<feature type="active site" description="Proton donor/acceptor" evidence="1">
    <location>
        <position position="164"/>
    </location>
</feature>
<feature type="active site" description="Proton donor/acceptor" evidence="1">
    <location>
        <position position="266"/>
    </location>
</feature>
<feature type="binding site">
    <location>
        <position position="56"/>
    </location>
    <ligand>
        <name>substrate</name>
    </ligand>
</feature>
<feature type="binding site">
    <location>
        <position position="162"/>
    </location>
    <ligand>
        <name>substrate</name>
    </ligand>
</feature>
<feature type="binding site">
    <location>
        <position position="194"/>
    </location>
    <ligand>
        <name>Mg(2+)</name>
        <dbReference type="ChEBI" id="CHEBI:18420"/>
    </ligand>
</feature>
<feature type="binding site">
    <location>
        <position position="219"/>
    </location>
    <ligand>
        <name>Mg(2+)</name>
        <dbReference type="ChEBI" id="CHEBI:18420"/>
    </ligand>
</feature>
<feature type="binding site">
    <location>
        <position position="242"/>
    </location>
    <ligand>
        <name>Mg(2+)</name>
        <dbReference type="ChEBI" id="CHEBI:18420"/>
    </ligand>
</feature>
<feature type="binding site">
    <location>
        <position position="295"/>
    </location>
    <ligand>
        <name>substrate</name>
    </ligand>
</feature>
<feature type="strand" evidence="5">
    <location>
        <begin position="3"/>
        <end position="14"/>
    </location>
</feature>
<feature type="strand" evidence="5">
    <location>
        <begin position="20"/>
        <end position="22"/>
    </location>
</feature>
<feature type="strand" evidence="5">
    <location>
        <begin position="25"/>
        <end position="39"/>
    </location>
</feature>
<feature type="strand" evidence="5">
    <location>
        <begin position="44"/>
        <end position="49"/>
    </location>
</feature>
<feature type="strand" evidence="5">
    <location>
        <begin position="56"/>
        <end position="58"/>
    </location>
</feature>
<feature type="helix" evidence="5">
    <location>
        <begin position="61"/>
        <end position="71"/>
    </location>
</feature>
<feature type="helix" evidence="5">
    <location>
        <begin position="72"/>
        <end position="75"/>
    </location>
</feature>
<feature type="helix" evidence="5">
    <location>
        <begin position="83"/>
        <end position="91"/>
    </location>
</feature>
<feature type="helix" evidence="5">
    <location>
        <begin position="98"/>
        <end position="116"/>
    </location>
</feature>
<feature type="helix" evidence="5">
    <location>
        <begin position="120"/>
        <end position="123"/>
    </location>
</feature>
<feature type="strand" evidence="5">
    <location>
        <begin position="130"/>
        <end position="133"/>
    </location>
</feature>
<feature type="strand" evidence="5">
    <location>
        <begin position="136"/>
        <end position="138"/>
    </location>
</feature>
<feature type="helix" evidence="5">
    <location>
        <begin position="143"/>
        <end position="156"/>
    </location>
</feature>
<feature type="strand" evidence="5">
    <location>
        <begin position="159"/>
        <end position="164"/>
    </location>
</feature>
<feature type="helix" evidence="5">
    <location>
        <begin position="170"/>
        <end position="184"/>
    </location>
</feature>
<feature type="turn" evidence="5">
    <location>
        <begin position="185"/>
        <end position="188"/>
    </location>
</feature>
<feature type="strand" evidence="5">
    <location>
        <begin position="190"/>
        <end position="194"/>
    </location>
</feature>
<feature type="helix" evidence="5">
    <location>
        <begin position="201"/>
        <end position="210"/>
    </location>
</feature>
<feature type="strand" evidence="5">
    <location>
        <begin position="216"/>
        <end position="220"/>
    </location>
</feature>
<feature type="strand" evidence="5">
    <location>
        <begin position="222"/>
        <end position="224"/>
    </location>
</feature>
<feature type="helix" evidence="5">
    <location>
        <begin position="225"/>
        <end position="231"/>
    </location>
</feature>
<feature type="helix" evidence="5">
    <location>
        <begin position="232"/>
        <end position="234"/>
    </location>
</feature>
<feature type="strand" evidence="5">
    <location>
        <begin position="239"/>
        <end position="242"/>
    </location>
</feature>
<feature type="helix" evidence="5">
    <location>
        <begin position="248"/>
        <end position="256"/>
    </location>
</feature>
<feature type="strand" evidence="5">
    <location>
        <begin position="261"/>
        <end position="266"/>
    </location>
</feature>
<feature type="helix" evidence="5">
    <location>
        <begin position="267"/>
        <end position="270"/>
    </location>
</feature>
<feature type="helix" evidence="5">
    <location>
        <begin position="273"/>
        <end position="285"/>
    </location>
</feature>
<feature type="strand" evidence="5">
    <location>
        <begin position="290"/>
        <end position="293"/>
    </location>
</feature>
<feature type="helix" evidence="5">
    <location>
        <begin position="299"/>
        <end position="309"/>
    </location>
</feature>
<feature type="helix" evidence="5">
    <location>
        <begin position="314"/>
        <end position="316"/>
    </location>
</feature>
<feature type="strand" evidence="5">
    <location>
        <begin position="317"/>
        <end position="319"/>
    </location>
</feature>
<feature type="helix" evidence="5">
    <location>
        <begin position="324"/>
        <end position="326"/>
    </location>
</feature>
<feature type="turn" evidence="5">
    <location>
        <begin position="333"/>
        <end position="335"/>
    </location>
</feature>
<feature type="strand" evidence="5">
    <location>
        <begin position="343"/>
        <end position="345"/>
    </location>
</feature>
<feature type="strand" evidence="5">
    <location>
        <begin position="349"/>
        <end position="351"/>
    </location>
</feature>
<feature type="helix" evidence="5">
    <location>
        <begin position="358"/>
        <end position="360"/>
    </location>
</feature>
<feature type="strand" evidence="5">
    <location>
        <begin position="365"/>
        <end position="368"/>
    </location>
</feature>
<reference key="1">
    <citation type="submission" date="2006-12" db="EMBL/GenBank/DDBJ databases">
        <title>Complete sequence of chromosome 1 of Paracoccus denitrificans PD1222.</title>
        <authorList>
            <person name="Copeland A."/>
            <person name="Lucas S."/>
            <person name="Lapidus A."/>
            <person name="Barry K."/>
            <person name="Detter J.C."/>
            <person name="Glavina del Rio T."/>
            <person name="Hammon N."/>
            <person name="Israni S."/>
            <person name="Dalin E."/>
            <person name="Tice H."/>
            <person name="Pitluck S."/>
            <person name="Munk A.C."/>
            <person name="Brettin T."/>
            <person name="Bruce D."/>
            <person name="Han C."/>
            <person name="Tapia R."/>
            <person name="Gilna P."/>
            <person name="Schmutz J."/>
            <person name="Larimer F."/>
            <person name="Land M."/>
            <person name="Hauser L."/>
            <person name="Kyrpides N."/>
            <person name="Lykidis A."/>
            <person name="Spiro S."/>
            <person name="Richardson D.J."/>
            <person name="Moir J.W.B."/>
            <person name="Ferguson S.J."/>
            <person name="van Spanning R.J.M."/>
            <person name="Richardson P."/>
        </authorList>
    </citation>
    <scope>NUCLEOTIDE SEQUENCE [LARGE SCALE GENOMIC DNA]</scope>
    <source>
        <strain>Pd 1222</strain>
    </source>
</reference>
<reference key="2">
    <citation type="journal article" date="2013" name="Nature">
        <title>Discovery of new enzymes and metabolic pathways by using structure and genome context.</title>
        <authorList>
            <person name="Zhao S."/>
            <person name="Kumar R."/>
            <person name="Sakai A."/>
            <person name="Vetting M.W."/>
            <person name="Wood B.M."/>
            <person name="Brown S."/>
            <person name="Bonanno J.B."/>
            <person name="Hillerich B.S."/>
            <person name="Seidel R.D."/>
            <person name="Babbitt P.C."/>
            <person name="Almo S.C."/>
            <person name="Sweedler J.V."/>
            <person name="Gerlt J.A."/>
            <person name="Cronan J.E."/>
            <person name="Jacobson M.P."/>
        </authorList>
    </citation>
    <scope>FUNCTION</scope>
    <scope>CATALYTIC ACTIVITY</scope>
    <scope>KINETIC PARAMETERS</scope>
    <scope>GENE NAME</scope>
    <scope>INDUCTION</scope>
    <scope>DISRUPTION PHENOTYPE</scope>
    <scope>PATHWAY</scope>
    <source>
        <strain>Pd 1222</strain>
    </source>
</reference>
<reference key="3">
    <citation type="journal article" date="2014" name="MBio">
        <title>Prediction and biochemical demonstration of a catabolic pathway for the osmoprotectant proline betaine.</title>
        <authorList>
            <person name="Kumar R."/>
            <person name="Zhao S."/>
            <person name="Vetting M.W."/>
            <person name="Wood B.M."/>
            <person name="Sakai A."/>
            <person name="Cho K."/>
            <person name="Solbiati J."/>
            <person name="Almo S.C."/>
            <person name="Sweedler J.V."/>
            <person name="Jacobson M.P."/>
            <person name="Gerlt J.A."/>
            <person name="Cronan J.E."/>
        </authorList>
    </citation>
    <scope>X-RAY CRYSTALLOGRAPHY (1.60 ANGSTROMS) IN COMPLEXES WITH MAGNESIUM AND HYDROXYPROLINE BETAINE OR PROLINE BETAINE</scope>
    <scope>COFACTOR</scope>
    <scope>CATALYTIC ACTIVITY</scope>
    <scope>BIOPHYSICOCHEMICAL PROPERTIES</scope>
</reference>